<proteinExistence type="inferred from homology"/>
<keyword id="KW-0067">ATP-binding</keyword>
<keyword id="KW-0963">Cytoplasm</keyword>
<keyword id="KW-0436">Ligase</keyword>
<keyword id="KW-0547">Nucleotide-binding</keyword>
<keyword id="KW-0566">Pantothenate biosynthesis</keyword>
<reference key="1">
    <citation type="journal article" date="2010" name="Genome Biol. Evol.">
        <title>Continuing evolution of Burkholderia mallei through genome reduction and large-scale rearrangements.</title>
        <authorList>
            <person name="Losada L."/>
            <person name="Ronning C.M."/>
            <person name="DeShazer D."/>
            <person name="Woods D."/>
            <person name="Fedorova N."/>
            <person name="Kim H.S."/>
            <person name="Shabalina S.A."/>
            <person name="Pearson T.R."/>
            <person name="Brinkac L."/>
            <person name="Tan P."/>
            <person name="Nandi T."/>
            <person name="Crabtree J."/>
            <person name="Badger J."/>
            <person name="Beckstrom-Sternberg S."/>
            <person name="Saqib M."/>
            <person name="Schutzer S.E."/>
            <person name="Keim P."/>
            <person name="Nierman W.C."/>
        </authorList>
    </citation>
    <scope>NUCLEOTIDE SEQUENCE [LARGE SCALE GENOMIC DNA]</scope>
    <source>
        <strain>1710b</strain>
    </source>
</reference>
<dbReference type="EC" id="6.3.2.1" evidence="1"/>
<dbReference type="EMBL" id="CP000124">
    <property type="protein sequence ID" value="ABA49359.1"/>
    <property type="molecule type" value="Genomic_DNA"/>
</dbReference>
<dbReference type="RefSeq" id="WP_004192993.1">
    <property type="nucleotide sequence ID" value="NC_007434.1"/>
</dbReference>
<dbReference type="SMR" id="Q3JUY8"/>
<dbReference type="EnsemblBacteria" id="ABA49359">
    <property type="protein sequence ID" value="ABA49359"/>
    <property type="gene ID" value="BURPS1710b_1204"/>
</dbReference>
<dbReference type="GeneID" id="93059491"/>
<dbReference type="KEGG" id="bpm:BURPS1710b_1204"/>
<dbReference type="HOGENOM" id="CLU_047148_0_0_4"/>
<dbReference type="UniPathway" id="UPA00028">
    <property type="reaction ID" value="UER00005"/>
</dbReference>
<dbReference type="Proteomes" id="UP000002700">
    <property type="component" value="Chromosome I"/>
</dbReference>
<dbReference type="GO" id="GO:0005829">
    <property type="term" value="C:cytosol"/>
    <property type="evidence" value="ECO:0007669"/>
    <property type="project" value="TreeGrafter"/>
</dbReference>
<dbReference type="GO" id="GO:0005524">
    <property type="term" value="F:ATP binding"/>
    <property type="evidence" value="ECO:0007669"/>
    <property type="project" value="UniProtKB-KW"/>
</dbReference>
<dbReference type="GO" id="GO:0004592">
    <property type="term" value="F:pantoate-beta-alanine ligase activity"/>
    <property type="evidence" value="ECO:0007669"/>
    <property type="project" value="UniProtKB-UniRule"/>
</dbReference>
<dbReference type="GO" id="GO:0015940">
    <property type="term" value="P:pantothenate biosynthetic process"/>
    <property type="evidence" value="ECO:0007669"/>
    <property type="project" value="UniProtKB-UniRule"/>
</dbReference>
<dbReference type="CDD" id="cd00560">
    <property type="entry name" value="PanC"/>
    <property type="match status" value="1"/>
</dbReference>
<dbReference type="Gene3D" id="3.40.50.620">
    <property type="entry name" value="HUPs"/>
    <property type="match status" value="1"/>
</dbReference>
<dbReference type="Gene3D" id="3.30.1300.10">
    <property type="entry name" value="Pantoate-beta-alanine ligase, C-terminal domain"/>
    <property type="match status" value="1"/>
</dbReference>
<dbReference type="HAMAP" id="MF_00158">
    <property type="entry name" value="PanC"/>
    <property type="match status" value="1"/>
</dbReference>
<dbReference type="InterPro" id="IPR004821">
    <property type="entry name" value="Cyt_trans-like"/>
</dbReference>
<dbReference type="InterPro" id="IPR003721">
    <property type="entry name" value="Pantoate_ligase"/>
</dbReference>
<dbReference type="InterPro" id="IPR042176">
    <property type="entry name" value="Pantoate_ligase_C"/>
</dbReference>
<dbReference type="InterPro" id="IPR014729">
    <property type="entry name" value="Rossmann-like_a/b/a_fold"/>
</dbReference>
<dbReference type="NCBIfam" id="TIGR00125">
    <property type="entry name" value="cyt_tran_rel"/>
    <property type="match status" value="1"/>
</dbReference>
<dbReference type="NCBIfam" id="TIGR00018">
    <property type="entry name" value="panC"/>
    <property type="match status" value="1"/>
</dbReference>
<dbReference type="PANTHER" id="PTHR21299">
    <property type="entry name" value="CYTIDYLATE KINASE/PANTOATE-BETA-ALANINE LIGASE"/>
    <property type="match status" value="1"/>
</dbReference>
<dbReference type="PANTHER" id="PTHR21299:SF1">
    <property type="entry name" value="PANTOATE--BETA-ALANINE LIGASE"/>
    <property type="match status" value="1"/>
</dbReference>
<dbReference type="Pfam" id="PF02569">
    <property type="entry name" value="Pantoate_ligase"/>
    <property type="match status" value="1"/>
</dbReference>
<dbReference type="SUPFAM" id="SSF52374">
    <property type="entry name" value="Nucleotidylyl transferase"/>
    <property type="match status" value="1"/>
</dbReference>
<organism>
    <name type="scientific">Burkholderia pseudomallei (strain 1710b)</name>
    <dbReference type="NCBI Taxonomy" id="320372"/>
    <lineage>
        <taxon>Bacteria</taxon>
        <taxon>Pseudomonadati</taxon>
        <taxon>Pseudomonadota</taxon>
        <taxon>Betaproteobacteria</taxon>
        <taxon>Burkholderiales</taxon>
        <taxon>Burkholderiaceae</taxon>
        <taxon>Burkholderia</taxon>
        <taxon>pseudomallei group</taxon>
    </lineage>
</organism>
<accession>Q3JUY8</accession>
<evidence type="ECO:0000255" key="1">
    <source>
        <dbReference type="HAMAP-Rule" id="MF_00158"/>
    </source>
</evidence>
<protein>
    <recommendedName>
        <fullName evidence="1">Pantothenate synthetase</fullName>
        <shortName evidence="1">PS</shortName>
        <ecNumber evidence="1">6.3.2.1</ecNumber>
    </recommendedName>
    <alternativeName>
        <fullName evidence="1">Pantoate--beta-alanine ligase</fullName>
    </alternativeName>
    <alternativeName>
        <fullName evidence="1">Pantoate-activating enzyme</fullName>
    </alternativeName>
</protein>
<feature type="chain" id="PRO_0000305416" description="Pantothenate synthetase">
    <location>
        <begin position="1"/>
        <end position="279"/>
    </location>
</feature>
<feature type="active site" description="Proton donor" evidence="1">
    <location>
        <position position="33"/>
    </location>
</feature>
<feature type="binding site" evidence="1">
    <location>
        <begin position="26"/>
        <end position="33"/>
    </location>
    <ligand>
        <name>ATP</name>
        <dbReference type="ChEBI" id="CHEBI:30616"/>
    </ligand>
</feature>
<feature type="binding site" evidence="1">
    <location>
        <position position="57"/>
    </location>
    <ligand>
        <name>(R)-pantoate</name>
        <dbReference type="ChEBI" id="CHEBI:15980"/>
    </ligand>
</feature>
<feature type="binding site" evidence="1">
    <location>
        <position position="57"/>
    </location>
    <ligand>
        <name>beta-alanine</name>
        <dbReference type="ChEBI" id="CHEBI:57966"/>
    </ligand>
</feature>
<feature type="binding site" evidence="1">
    <location>
        <begin position="144"/>
        <end position="147"/>
    </location>
    <ligand>
        <name>ATP</name>
        <dbReference type="ChEBI" id="CHEBI:30616"/>
    </ligand>
</feature>
<feature type="binding site" evidence="1">
    <location>
        <position position="150"/>
    </location>
    <ligand>
        <name>(R)-pantoate</name>
        <dbReference type="ChEBI" id="CHEBI:15980"/>
    </ligand>
</feature>
<feature type="binding site" evidence="1">
    <location>
        <position position="173"/>
    </location>
    <ligand>
        <name>ATP</name>
        <dbReference type="ChEBI" id="CHEBI:30616"/>
    </ligand>
</feature>
<feature type="binding site" evidence="1">
    <location>
        <begin position="181"/>
        <end position="184"/>
    </location>
    <ligand>
        <name>ATP</name>
        <dbReference type="ChEBI" id="CHEBI:30616"/>
    </ligand>
</feature>
<comment type="function">
    <text evidence="1">Catalyzes the condensation of pantoate with beta-alanine in an ATP-dependent reaction via a pantoyl-adenylate intermediate.</text>
</comment>
<comment type="catalytic activity">
    <reaction evidence="1">
        <text>(R)-pantoate + beta-alanine + ATP = (R)-pantothenate + AMP + diphosphate + H(+)</text>
        <dbReference type="Rhea" id="RHEA:10912"/>
        <dbReference type="ChEBI" id="CHEBI:15378"/>
        <dbReference type="ChEBI" id="CHEBI:15980"/>
        <dbReference type="ChEBI" id="CHEBI:29032"/>
        <dbReference type="ChEBI" id="CHEBI:30616"/>
        <dbReference type="ChEBI" id="CHEBI:33019"/>
        <dbReference type="ChEBI" id="CHEBI:57966"/>
        <dbReference type="ChEBI" id="CHEBI:456215"/>
        <dbReference type="EC" id="6.3.2.1"/>
    </reaction>
</comment>
<comment type="pathway">
    <text evidence="1">Cofactor biosynthesis; (R)-pantothenate biosynthesis; (R)-pantothenate from (R)-pantoate and beta-alanine: step 1/1.</text>
</comment>
<comment type="subunit">
    <text evidence="1">Homodimer.</text>
</comment>
<comment type="subcellular location">
    <subcellularLocation>
        <location evidence="1">Cytoplasm</location>
    </subcellularLocation>
</comment>
<comment type="miscellaneous">
    <text evidence="1">The reaction proceeds by a bi uni uni bi ping pong mechanism.</text>
</comment>
<comment type="similarity">
    <text evidence="1">Belongs to the pantothenate synthetase family.</text>
</comment>
<gene>
    <name evidence="1" type="primary">panC</name>
    <name type="ordered locus">BURPS1710b_1204</name>
</gene>
<sequence length="279" mass="31207">MKVISSIQELRDQLRGQNRTAFVPTMGNLHDGHLSLMRLARQHGDPVVASIFVNRLQFGPNEDFDQYPRTLQDDIEKLQKENVYVLFAPTERDMYPEPQEYRVQPPHDLGDILEGEFRPGFFTGVCTVVTKLMACVQPRVAVFGKKDYQQLMIVRRMCQQLALPVEIIAAETVRDADGLALSSRNRYLSEAERAEAPELAKTLAQVRSAVLGGERDLAAIEQRALAHLAARGWKPDYVSIRRRANLVAPSAAHIEAGEPLVVLTAAKLGATRLIDNLEI</sequence>
<name>PANC_BURP1</name>